<reference key="1">
    <citation type="journal article" date="2006" name="Proc. Natl. Acad. Sci. U.S.A.">
        <title>The complete genome sequence of a chronic atrophic gastritis Helicobacter pylori strain: evolution during disease progression.</title>
        <authorList>
            <person name="Oh J.D."/>
            <person name="Kling-Baeckhed H."/>
            <person name="Giannakis M."/>
            <person name="Xu J."/>
            <person name="Fulton R.S."/>
            <person name="Fulton L.A."/>
            <person name="Cordum H.S."/>
            <person name="Wang C."/>
            <person name="Elliott G."/>
            <person name="Edwards J."/>
            <person name="Mardis E.R."/>
            <person name="Engstrand L.G."/>
            <person name="Gordon J.I."/>
        </authorList>
    </citation>
    <scope>NUCLEOTIDE SEQUENCE [LARGE SCALE GENOMIC DNA]</scope>
    <source>
        <strain>HPAG1</strain>
    </source>
</reference>
<accession>Q1CVF4</accession>
<proteinExistence type="inferred from homology"/>
<dbReference type="EMBL" id="CP000241">
    <property type="protein sequence ID" value="ABF84068.1"/>
    <property type="molecule type" value="Genomic_DNA"/>
</dbReference>
<dbReference type="RefSeq" id="WP_000235749.1">
    <property type="nucleotide sequence ID" value="NC_008086.1"/>
</dbReference>
<dbReference type="SMR" id="Q1CVF4"/>
<dbReference type="KEGG" id="hpa:HPAG1_0001"/>
<dbReference type="HOGENOM" id="CLU_087843_3_3_7"/>
<dbReference type="GO" id="GO:0005829">
    <property type="term" value="C:cytosol"/>
    <property type="evidence" value="ECO:0007669"/>
    <property type="project" value="TreeGrafter"/>
</dbReference>
<dbReference type="GO" id="GO:0003723">
    <property type="term" value="F:RNA binding"/>
    <property type="evidence" value="ECO:0007669"/>
    <property type="project" value="UniProtKB-UniRule"/>
</dbReference>
<dbReference type="GO" id="GO:0006353">
    <property type="term" value="P:DNA-templated transcription termination"/>
    <property type="evidence" value="ECO:0007669"/>
    <property type="project" value="UniProtKB-UniRule"/>
</dbReference>
<dbReference type="GO" id="GO:0031564">
    <property type="term" value="P:transcription antitermination"/>
    <property type="evidence" value="ECO:0007669"/>
    <property type="project" value="UniProtKB-KW"/>
</dbReference>
<dbReference type="CDD" id="cd00619">
    <property type="entry name" value="Terminator_NusB"/>
    <property type="match status" value="1"/>
</dbReference>
<dbReference type="FunFam" id="1.10.940.10:FF:000004">
    <property type="entry name" value="Transcription antitermination protein NusB"/>
    <property type="match status" value="1"/>
</dbReference>
<dbReference type="Gene3D" id="1.10.940.10">
    <property type="entry name" value="NusB-like"/>
    <property type="match status" value="1"/>
</dbReference>
<dbReference type="HAMAP" id="MF_00073">
    <property type="entry name" value="NusB"/>
    <property type="match status" value="1"/>
</dbReference>
<dbReference type="InterPro" id="IPR035926">
    <property type="entry name" value="NusB-like_sf"/>
</dbReference>
<dbReference type="InterPro" id="IPR011605">
    <property type="entry name" value="NusB_fam"/>
</dbReference>
<dbReference type="InterPro" id="IPR006027">
    <property type="entry name" value="NusB_RsmB_TIM44"/>
</dbReference>
<dbReference type="NCBIfam" id="TIGR01951">
    <property type="entry name" value="nusB"/>
    <property type="match status" value="1"/>
</dbReference>
<dbReference type="PANTHER" id="PTHR11078:SF3">
    <property type="entry name" value="ANTITERMINATION NUSB DOMAIN-CONTAINING PROTEIN"/>
    <property type="match status" value="1"/>
</dbReference>
<dbReference type="PANTHER" id="PTHR11078">
    <property type="entry name" value="N UTILIZATION SUBSTANCE PROTEIN B-RELATED"/>
    <property type="match status" value="1"/>
</dbReference>
<dbReference type="Pfam" id="PF01029">
    <property type="entry name" value="NusB"/>
    <property type="match status" value="1"/>
</dbReference>
<dbReference type="SUPFAM" id="SSF48013">
    <property type="entry name" value="NusB-like"/>
    <property type="match status" value="1"/>
</dbReference>
<gene>
    <name evidence="1" type="primary">nusB</name>
    <name type="ordered locus">HPAG1_0001</name>
</gene>
<keyword id="KW-0694">RNA-binding</keyword>
<keyword id="KW-0804">Transcription</keyword>
<keyword id="KW-0889">Transcription antitermination</keyword>
<keyword id="KW-0805">Transcription regulation</keyword>
<evidence type="ECO:0000255" key="1">
    <source>
        <dbReference type="HAMAP-Rule" id="MF_00073"/>
    </source>
</evidence>
<sequence>MATRTQARGAVVELLYAFESGNEEIKKIASSMLEEKKIKNNQLAFALSLFNGVLERINEIDALIEPHLKDWDFKRLGSMEKAILRLGAYEIGFTPTQNPIIINECIELGKLYAEPNTPKFLNAILDSLSKKLAQKPLN</sequence>
<feature type="chain" id="PRO_0000265531" description="Transcription antitermination protein NusB">
    <location>
        <begin position="1"/>
        <end position="138"/>
    </location>
</feature>
<comment type="function">
    <text evidence="1">Involved in transcription antitermination. Required for transcription of ribosomal RNA (rRNA) genes. Binds specifically to the boxA antiterminator sequence of the ribosomal RNA (rrn) operons.</text>
</comment>
<comment type="similarity">
    <text evidence="1">Belongs to the NusB family.</text>
</comment>
<protein>
    <recommendedName>
        <fullName evidence="1">Transcription antitermination protein NusB</fullName>
    </recommendedName>
    <alternativeName>
        <fullName evidence="1">Antitermination factor NusB</fullName>
    </alternativeName>
</protein>
<name>NUSB_HELPH</name>
<organism>
    <name type="scientific">Helicobacter pylori (strain HPAG1)</name>
    <dbReference type="NCBI Taxonomy" id="357544"/>
    <lineage>
        <taxon>Bacteria</taxon>
        <taxon>Pseudomonadati</taxon>
        <taxon>Campylobacterota</taxon>
        <taxon>Epsilonproteobacteria</taxon>
        <taxon>Campylobacterales</taxon>
        <taxon>Helicobacteraceae</taxon>
        <taxon>Helicobacter</taxon>
    </lineage>
</organism>